<feature type="chain" id="PRO_0000107359" description="Uncharacterized protein MJ1477">
    <location>
        <begin position="1"/>
        <end position="346"/>
    </location>
</feature>
<feature type="transmembrane region" description="Helical" evidence="1">
    <location>
        <begin position="16"/>
        <end position="36"/>
    </location>
</feature>
<organism>
    <name type="scientific">Methanocaldococcus jannaschii (strain ATCC 43067 / DSM 2661 / JAL-1 / JCM 10045 / NBRC 100440)</name>
    <name type="common">Methanococcus jannaschii</name>
    <dbReference type="NCBI Taxonomy" id="243232"/>
    <lineage>
        <taxon>Archaea</taxon>
        <taxon>Methanobacteriati</taxon>
        <taxon>Methanobacteriota</taxon>
        <taxon>Methanomada group</taxon>
        <taxon>Methanococci</taxon>
        <taxon>Methanococcales</taxon>
        <taxon>Methanocaldococcaceae</taxon>
        <taxon>Methanocaldococcus</taxon>
    </lineage>
</organism>
<sequence>MHLNKIRGKNMKKSHILGIIICIILIVGFFISFDSTFLDNPKMMSKSKNNIRNAENLTNISKNSNNLKFLWAYQLQNADIDEIANSNFTLIVIDYSKDGTENGKYSEEEIEKLKKAGKIPIAYISIGEAEDYRFYWDNEWLKNPPKWLGDENPEWEGCYAVKYWHPEWKKIIFSYLDKIIQQGFCGVYLDKVDEFEYWAENGYDEDFTAKEMIKFIVEISNYCRNKTNNSFIIIPQNGERLLEYDKHGKLLNTVSGWAVEDLFYDGVEQKTEEEINERIKLLDKVKDSGKFVLVVDYVDDGTKTNENLKRVEDFINKSLDKGYVPYVAKSDRELDELNTWWLKLIN</sequence>
<protein>
    <recommendedName>
        <fullName>Uncharacterized protein MJ1477</fullName>
    </recommendedName>
</protein>
<comment type="subcellular location">
    <subcellularLocation>
        <location evidence="2">Membrane</location>
        <topology evidence="2">Single-pass membrane protein</topology>
    </subcellularLocation>
</comment>
<proteinExistence type="predicted"/>
<evidence type="ECO:0000255" key="1"/>
<evidence type="ECO:0000305" key="2"/>
<name>Y1477_METJA</name>
<gene>
    <name type="ordered locus">MJ1477</name>
</gene>
<reference key="1">
    <citation type="journal article" date="1996" name="Science">
        <title>Complete genome sequence of the methanogenic archaeon, Methanococcus jannaschii.</title>
        <authorList>
            <person name="Bult C.J."/>
            <person name="White O."/>
            <person name="Olsen G.J."/>
            <person name="Zhou L."/>
            <person name="Fleischmann R.D."/>
            <person name="Sutton G.G."/>
            <person name="Blake J.A."/>
            <person name="FitzGerald L.M."/>
            <person name="Clayton R.A."/>
            <person name="Gocayne J.D."/>
            <person name="Kerlavage A.R."/>
            <person name="Dougherty B.A."/>
            <person name="Tomb J.-F."/>
            <person name="Adams M.D."/>
            <person name="Reich C.I."/>
            <person name="Overbeek R."/>
            <person name="Kirkness E.F."/>
            <person name="Weinstock K.G."/>
            <person name="Merrick J.M."/>
            <person name="Glodek A."/>
            <person name="Scott J.L."/>
            <person name="Geoghagen N.S.M."/>
            <person name="Weidman J.F."/>
            <person name="Fuhrmann J.L."/>
            <person name="Nguyen D."/>
            <person name="Utterback T.R."/>
            <person name="Kelley J.M."/>
            <person name="Peterson J.D."/>
            <person name="Sadow P.W."/>
            <person name="Hanna M.C."/>
            <person name="Cotton M.D."/>
            <person name="Roberts K.M."/>
            <person name="Hurst M.A."/>
            <person name="Kaine B.P."/>
            <person name="Borodovsky M."/>
            <person name="Klenk H.-P."/>
            <person name="Fraser C.M."/>
            <person name="Smith H.O."/>
            <person name="Woese C.R."/>
            <person name="Venter J.C."/>
        </authorList>
    </citation>
    <scope>NUCLEOTIDE SEQUENCE [LARGE SCALE GENOMIC DNA]</scope>
    <source>
        <strain>ATCC 43067 / DSM 2661 / JAL-1 / JCM 10045 / NBRC 100440</strain>
    </source>
</reference>
<dbReference type="EMBL" id="L77117">
    <property type="protein sequence ID" value="AAB99489.1"/>
    <property type="molecule type" value="Genomic_DNA"/>
</dbReference>
<dbReference type="PIR" id="D64484">
    <property type="entry name" value="D64484"/>
</dbReference>
<dbReference type="FunCoup" id="Q58872">
    <property type="interactions" value="28"/>
</dbReference>
<dbReference type="STRING" id="243232.MJ_1477"/>
<dbReference type="PaxDb" id="243232-MJ_1477"/>
<dbReference type="EnsemblBacteria" id="AAB99489">
    <property type="protein sequence ID" value="AAB99489"/>
    <property type="gene ID" value="MJ_1477"/>
</dbReference>
<dbReference type="KEGG" id="mja:MJ_1477"/>
<dbReference type="eggNOG" id="arCOG07957">
    <property type="taxonomic scope" value="Archaea"/>
</dbReference>
<dbReference type="HOGENOM" id="CLU_058176_0_0_2"/>
<dbReference type="InParanoid" id="Q58872"/>
<dbReference type="OrthoDB" id="124346at2157"/>
<dbReference type="PhylomeDB" id="Q58872"/>
<dbReference type="Proteomes" id="UP000000805">
    <property type="component" value="Chromosome"/>
</dbReference>
<dbReference type="GO" id="GO:0016020">
    <property type="term" value="C:membrane"/>
    <property type="evidence" value="ECO:0007669"/>
    <property type="project" value="UniProtKB-SubCell"/>
</dbReference>
<dbReference type="Gene3D" id="3.20.20.70">
    <property type="entry name" value="Aldolase class I"/>
    <property type="match status" value="1"/>
</dbReference>
<dbReference type="InterPro" id="IPR013785">
    <property type="entry name" value="Aldolase_TIM"/>
</dbReference>
<dbReference type="InterPro" id="IPR004352">
    <property type="entry name" value="GH114_TIM-barrel"/>
</dbReference>
<dbReference type="InterPro" id="IPR017853">
    <property type="entry name" value="Glycoside_hydrolase_SF"/>
</dbReference>
<dbReference type="InterPro" id="IPR016062">
    <property type="entry name" value="TM1410-rel"/>
</dbReference>
<dbReference type="InterPro" id="IPR016063">
    <property type="entry name" value="TM1410_Glycdase"/>
</dbReference>
<dbReference type="NCBIfam" id="TIGR01370">
    <property type="entry name" value="MJ1477/TM1410 family putative glycoside hydrolase"/>
    <property type="match status" value="1"/>
</dbReference>
<dbReference type="PANTHER" id="PTHR35882:SF1">
    <property type="match status" value="1"/>
</dbReference>
<dbReference type="PANTHER" id="PTHR35882">
    <property type="entry name" value="PELA"/>
    <property type="match status" value="1"/>
</dbReference>
<dbReference type="Pfam" id="PF03537">
    <property type="entry name" value="Glyco_hydro_114"/>
    <property type="match status" value="1"/>
</dbReference>
<dbReference type="PRINTS" id="PR01545">
    <property type="entry name" value="THEMAYE10DUF"/>
</dbReference>
<dbReference type="SUPFAM" id="SSF51445">
    <property type="entry name" value="(Trans)glycosidases"/>
    <property type="match status" value="1"/>
</dbReference>
<keyword id="KW-0472">Membrane</keyword>
<keyword id="KW-1185">Reference proteome</keyword>
<keyword id="KW-0812">Transmembrane</keyword>
<keyword id="KW-1133">Transmembrane helix</keyword>
<accession>Q58872</accession>